<protein>
    <recommendedName>
        <fullName evidence="3">Nucleoside kinase</fullName>
        <shortName evidence="3">NK</shortName>
    </recommendedName>
    <alternativeName>
        <fullName evidence="4">ATP-dependent nucleoside monophosphokinase</fullName>
    </alternativeName>
    <alternativeName>
        <fullName evidence="3">Cytidine kinase</fullName>
        <ecNumber evidence="2">2.7.1.213</ecNumber>
    </alternativeName>
    <alternativeName>
        <fullName evidence="3">Guanosine-inosine kinase</fullName>
        <ecNumber evidence="2">2.7.1.73</ecNumber>
    </alternativeName>
</protein>
<gene>
    <name type="ordered locus">MJ0406</name>
</gene>
<evidence type="ECO:0000269" key="1">
    <source>
    </source>
</evidence>
<evidence type="ECO:0000269" key="2">
    <source>
    </source>
</evidence>
<evidence type="ECO:0000303" key="3">
    <source>
    </source>
</evidence>
<evidence type="ECO:0000305" key="4"/>
<evidence type="ECO:0000305" key="5">
    <source>
    </source>
</evidence>
<evidence type="ECO:0007744" key="6">
    <source>
        <dbReference type="PDB" id="2C49"/>
    </source>
</evidence>
<evidence type="ECO:0007829" key="7">
    <source>
        <dbReference type="PDB" id="2C49"/>
    </source>
</evidence>
<evidence type="ECO:0007829" key="8">
    <source>
        <dbReference type="PDB" id="2C4E"/>
    </source>
</evidence>
<proteinExistence type="evidence at protein level"/>
<name>NK_METJA</name>
<comment type="function">
    <text evidence="2">Catalyzes the phosphorylation of a wide range of nucleosides to yield nucleoside monophosphates. Shows the highest activity for inosine, guanosine and cytidine, but very poor kinase activity with adenosine, thymidine, uridine and xanthosine. ATP is the best phosphate donor, but can also use ITP and GTP. Shows extremely low activity with fructose-6-phosphate.</text>
</comment>
<comment type="catalytic activity">
    <reaction evidence="2">
        <text>cytidine + ATP = CMP + ADP + H(+)</text>
        <dbReference type="Rhea" id="RHEA:24674"/>
        <dbReference type="ChEBI" id="CHEBI:15378"/>
        <dbReference type="ChEBI" id="CHEBI:17562"/>
        <dbReference type="ChEBI" id="CHEBI:30616"/>
        <dbReference type="ChEBI" id="CHEBI:60377"/>
        <dbReference type="ChEBI" id="CHEBI:456216"/>
        <dbReference type="EC" id="2.7.1.213"/>
    </reaction>
</comment>
<comment type="catalytic activity">
    <reaction evidence="2">
        <text>guanosine + ATP = GMP + ADP + H(+)</text>
        <dbReference type="Rhea" id="RHEA:27710"/>
        <dbReference type="ChEBI" id="CHEBI:15378"/>
        <dbReference type="ChEBI" id="CHEBI:16750"/>
        <dbReference type="ChEBI" id="CHEBI:30616"/>
        <dbReference type="ChEBI" id="CHEBI:58115"/>
        <dbReference type="ChEBI" id="CHEBI:456216"/>
        <dbReference type="EC" id="2.7.1.73"/>
    </reaction>
</comment>
<comment type="catalytic activity">
    <reaction evidence="2">
        <text>inosine + ATP = IMP + ADP + H(+)</text>
        <dbReference type="Rhea" id="RHEA:21140"/>
        <dbReference type="ChEBI" id="CHEBI:15378"/>
        <dbReference type="ChEBI" id="CHEBI:17596"/>
        <dbReference type="ChEBI" id="CHEBI:30616"/>
        <dbReference type="ChEBI" id="CHEBI:58053"/>
        <dbReference type="ChEBI" id="CHEBI:456216"/>
        <dbReference type="EC" id="2.7.1.73"/>
    </reaction>
</comment>
<comment type="cofactor">
    <cofactor evidence="2 5">
        <name>Mg(2+)</name>
        <dbReference type="ChEBI" id="CHEBI:18420"/>
    </cofactor>
    <cofactor evidence="2">
        <name>Mn(2+)</name>
        <dbReference type="ChEBI" id="CHEBI:29035"/>
    </cofactor>
    <text evidence="2">Can use Mg(2+) and Mn(2+) with equal efficiency in vitro, and to a lesser extent, Ni(2+).</text>
</comment>
<comment type="biophysicochemical properties">
    <kinetics>
        <KM evidence="2">0.25 mM for ATP (at 70 degrees Celsius)</KM>
        <KM evidence="2">17 uM for cytidine (at 50 degrees Celsius)</KM>
        <KM evidence="2">20 uM for cytidine (at 70 degrees Celsius)</KM>
        <KM evidence="2">20 uM for inosine (at 70 degrees Celsius)</KM>
        <KM evidence="2">21 uM for inosine (at 50 degrees Celsius)</KM>
        <KM evidence="2">62 uM for guanosine (at 70 degrees Celsius)</KM>
        <KM evidence="2">78 uM for guanosine (at 50 degrees Celsius)</KM>
        <KM evidence="2">160 uM for adenosine (at 70 degrees Celsius)</KM>
        <KM evidence="2">180 uM for uridine (at 50 degrees Celsius)</KM>
        <KM evidence="2">200 uM for uridine (at 70 degrees Celsius)</KM>
        <KM evidence="2">230 uM for adenosine (at 50 degrees Celsius)</KM>
        <KM evidence="2">300 uM for ribose (at 70 degrees Celsius)</KM>
        <KM evidence="2">710 uM for xanthosine (at 50 degrees Celsius)</KM>
        <KM evidence="2">900 uM for thymidine (at 50 degrees Celsius)</KM>
        <KM evidence="2">1000 uM for thymidine (at 70 degrees Celsius)</KM>
        <KM evidence="2">1800 uM for fructose (at 70 degrees Celsius)</KM>
        <KM evidence="2">2200 uM for 2-deoxy-adenosine (at 70 degrees Celsius)</KM>
        <KM evidence="2">2500 uM for 2-deoxy-adenosine (at 50 degrees Celsius)</KM>
        <Vmax evidence="2">120.0 umol/min/mg enzyme with guanosine as substrate (at 70 degrees Celsius)</Vmax>
        <Vmax evidence="2">75.0 umol/min/mg enzyme with inosine as substrate (at 70 degrees Celsius)</Vmax>
        <Vmax evidence="2">70.0 umol/min/mg enzyme with cytidine as substrate (at 70 degrees Celsius)</Vmax>
        <Vmax evidence="2">29.3 umol/min/mg enzyme with guanosine as substrate (at 50 degrees Celsius)</Vmax>
        <Vmax evidence="2">18.8 umol/min/mg enzyme with inosine as substrate (at 50 degrees Celsius)</Vmax>
        <Vmax evidence="2">9.0 umol/min/mg enzyme with cytidine as substrate (at 50 degrees Celsius)</Vmax>
        <Vmax evidence="2">4.0 umol/min/mg enzyme with adenosine as substrate (at 70 degrees Celsius)</Vmax>
        <Vmax evidence="2">1.0 umol/min/mg enzyme with adenosine as substrate (at 50 degrees Celsius)</Vmax>
        <Vmax evidence="2">0.25 umol/min/mg enzyme with uridine as substrate (at 70 degrees Celsius)</Vmax>
        <Vmax evidence="2">0.6 umol/min/mg enzyme with xanthosine as substrate (at 50 degrees Celsius)</Vmax>
        <Vmax evidence="2">0.6 umol/min/mg enzyme with ribose as substrate (at 70 degrees Celsius)</Vmax>
        <Vmax evidence="2">0.2 umol/min/mg enzyme with 2-deoxy-adenosine as substrate (at 70 degrees Celsius)</Vmax>
        <Vmax evidence="2">0.08 umol/min/mg enzyme with thymidine as substrate (at 70 degrees Celsius)</Vmax>
        <Vmax evidence="2">0.05 umol/min/mg enzyme with 2-deoxy-adenosine as substrate (at 50 degrees Celsius)</Vmax>
        <Vmax evidence="2">0.04 umol/min/mg enzyme with uridine as substrate (at 50 degrees Celsius)</Vmax>
        <Vmax evidence="2">0.03 umol/min/mg enzyme with fructose as substrate (at 70 degrees Celsius)</Vmax>
        <Vmax evidence="2">0.01 umol/min/mg enzyme with thymidine as substrate (at 50 degrees Celsius)</Vmax>
    </kinetics>
    <phDependence>
        <text evidence="2">Optimum pH is 7.0. 50% of activity is found at pH 6.1 and 8.2.</text>
    </phDependence>
    <temperatureDependence>
        <text evidence="2">Optimum temperature is 85 degrees Celsius. Thermostable.</text>
    </temperatureDependence>
</comment>
<comment type="subunit">
    <text evidence="1 2">Homodimer.</text>
</comment>
<comment type="mass spectrometry" mass="33937.0" method="Electrospray" evidence="1"/>
<comment type="similarity">
    <text evidence="4">Belongs to the carbohydrate kinase PfkB family.</text>
</comment>
<accession>Q57849</accession>
<dbReference type="EC" id="2.7.1.213" evidence="2"/>
<dbReference type="EC" id="2.7.1.73" evidence="2"/>
<dbReference type="EMBL" id="L77117">
    <property type="protein sequence ID" value="AAB98396.1"/>
    <property type="molecule type" value="Genomic_DNA"/>
</dbReference>
<dbReference type="PIR" id="F64350">
    <property type="entry name" value="F64350"/>
</dbReference>
<dbReference type="PDB" id="2C49">
    <property type="method" value="X-ray"/>
    <property type="resolution" value="1.92 A"/>
    <property type="chains" value="A/B=1-302"/>
</dbReference>
<dbReference type="PDB" id="2C4E">
    <property type="method" value="X-ray"/>
    <property type="resolution" value="1.70 A"/>
    <property type="chains" value="A=1-302"/>
</dbReference>
<dbReference type="PDBsum" id="2C49"/>
<dbReference type="PDBsum" id="2C4E"/>
<dbReference type="SMR" id="Q57849"/>
<dbReference type="FunCoup" id="Q57849">
    <property type="interactions" value="109"/>
</dbReference>
<dbReference type="STRING" id="243232.MJ_0406"/>
<dbReference type="PaxDb" id="243232-MJ_0406"/>
<dbReference type="EnsemblBacteria" id="AAB98396">
    <property type="protein sequence ID" value="AAB98396"/>
    <property type="gene ID" value="MJ_0406"/>
</dbReference>
<dbReference type="KEGG" id="mja:MJ_0406"/>
<dbReference type="eggNOG" id="arCOG00014">
    <property type="taxonomic scope" value="Archaea"/>
</dbReference>
<dbReference type="HOGENOM" id="CLU_027634_5_2_2"/>
<dbReference type="InParanoid" id="Q57849"/>
<dbReference type="PhylomeDB" id="Q57849"/>
<dbReference type="BRENDA" id="2.7.1.B20">
    <property type="organism ID" value="3260"/>
</dbReference>
<dbReference type="EvolutionaryTrace" id="Q57849"/>
<dbReference type="Proteomes" id="UP000000805">
    <property type="component" value="Chromosome"/>
</dbReference>
<dbReference type="GO" id="GO:0005524">
    <property type="term" value="F:ATP binding"/>
    <property type="evidence" value="ECO:0007669"/>
    <property type="project" value="UniProtKB-KW"/>
</dbReference>
<dbReference type="GO" id="GO:0043771">
    <property type="term" value="F:cytidine kinase activity"/>
    <property type="evidence" value="ECO:0007669"/>
    <property type="project" value="UniProtKB-EC"/>
</dbReference>
<dbReference type="GO" id="GO:0106366">
    <property type="term" value="F:guanosine kinase activity"/>
    <property type="evidence" value="ECO:0007669"/>
    <property type="project" value="RHEA"/>
</dbReference>
<dbReference type="GO" id="GO:0008906">
    <property type="term" value="F:inosine kinase activity"/>
    <property type="evidence" value="ECO:0000314"/>
    <property type="project" value="UniProtKB"/>
</dbReference>
<dbReference type="GO" id="GO:0000287">
    <property type="term" value="F:magnesium ion binding"/>
    <property type="evidence" value="ECO:0000314"/>
    <property type="project" value="UniProtKB"/>
</dbReference>
<dbReference type="GO" id="GO:0019206">
    <property type="term" value="F:nucleoside kinase activity"/>
    <property type="evidence" value="ECO:0000314"/>
    <property type="project" value="UniProtKB"/>
</dbReference>
<dbReference type="CDD" id="cd01942">
    <property type="entry name" value="ribokinase_group_A"/>
    <property type="match status" value="1"/>
</dbReference>
<dbReference type="FunFam" id="3.40.1190.20:FF:000123">
    <property type="entry name" value="Nucleoside kinase"/>
    <property type="match status" value="1"/>
</dbReference>
<dbReference type="Gene3D" id="3.40.1190.20">
    <property type="match status" value="1"/>
</dbReference>
<dbReference type="InterPro" id="IPR002173">
    <property type="entry name" value="Carboh/pur_kinase_PfkB_CS"/>
</dbReference>
<dbReference type="InterPro" id="IPR011611">
    <property type="entry name" value="PfkB_dom"/>
</dbReference>
<dbReference type="InterPro" id="IPR002139">
    <property type="entry name" value="Ribo/fructo_kinase"/>
</dbReference>
<dbReference type="InterPro" id="IPR029056">
    <property type="entry name" value="Ribokinase-like"/>
</dbReference>
<dbReference type="PANTHER" id="PTHR10584:SF166">
    <property type="entry name" value="RIBOKINASE"/>
    <property type="match status" value="1"/>
</dbReference>
<dbReference type="PANTHER" id="PTHR10584">
    <property type="entry name" value="SUGAR KINASE"/>
    <property type="match status" value="1"/>
</dbReference>
<dbReference type="Pfam" id="PF00294">
    <property type="entry name" value="PfkB"/>
    <property type="match status" value="1"/>
</dbReference>
<dbReference type="PRINTS" id="PR00990">
    <property type="entry name" value="RIBOKINASE"/>
</dbReference>
<dbReference type="SUPFAM" id="SSF53613">
    <property type="entry name" value="Ribokinase-like"/>
    <property type="match status" value="1"/>
</dbReference>
<dbReference type="PROSITE" id="PS00583">
    <property type="entry name" value="PFKB_KINASES_1"/>
    <property type="match status" value="1"/>
</dbReference>
<dbReference type="PROSITE" id="PS00584">
    <property type="entry name" value="PFKB_KINASES_2"/>
    <property type="match status" value="1"/>
</dbReference>
<organism>
    <name type="scientific">Methanocaldococcus jannaschii (strain ATCC 43067 / DSM 2661 / JAL-1 / JCM 10045 / NBRC 100440)</name>
    <name type="common">Methanococcus jannaschii</name>
    <dbReference type="NCBI Taxonomy" id="243232"/>
    <lineage>
        <taxon>Archaea</taxon>
        <taxon>Methanobacteriati</taxon>
        <taxon>Methanobacteriota</taxon>
        <taxon>Methanomada group</taxon>
        <taxon>Methanococci</taxon>
        <taxon>Methanococcales</taxon>
        <taxon>Methanocaldococcaceae</taxon>
        <taxon>Methanocaldococcus</taxon>
    </lineage>
</organism>
<reference key="1">
    <citation type="journal article" date="1996" name="Science">
        <title>Complete genome sequence of the methanogenic archaeon, Methanococcus jannaschii.</title>
        <authorList>
            <person name="Bult C.J."/>
            <person name="White O."/>
            <person name="Olsen G.J."/>
            <person name="Zhou L."/>
            <person name="Fleischmann R.D."/>
            <person name="Sutton G.G."/>
            <person name="Blake J.A."/>
            <person name="FitzGerald L.M."/>
            <person name="Clayton R.A."/>
            <person name="Gocayne J.D."/>
            <person name="Kerlavage A.R."/>
            <person name="Dougherty B.A."/>
            <person name="Tomb J.-F."/>
            <person name="Adams M.D."/>
            <person name="Reich C.I."/>
            <person name="Overbeek R."/>
            <person name="Kirkness E.F."/>
            <person name="Weinstock K.G."/>
            <person name="Merrick J.M."/>
            <person name="Glodek A."/>
            <person name="Scott J.L."/>
            <person name="Geoghagen N.S.M."/>
            <person name="Weidman J.F."/>
            <person name="Fuhrmann J.L."/>
            <person name="Nguyen D."/>
            <person name="Utterback T.R."/>
            <person name="Kelley J.M."/>
            <person name="Peterson J.D."/>
            <person name="Sadow P.W."/>
            <person name="Hanna M.C."/>
            <person name="Cotton M.D."/>
            <person name="Roberts K.M."/>
            <person name="Hurst M.A."/>
            <person name="Kaine B.P."/>
            <person name="Borodovsky M."/>
            <person name="Klenk H.-P."/>
            <person name="Fraser C.M."/>
            <person name="Smith H.O."/>
            <person name="Woese C.R."/>
            <person name="Venter J.C."/>
        </authorList>
    </citation>
    <scope>NUCLEOTIDE SEQUENCE [LARGE SCALE GENOMIC DNA]</scope>
    <source>
        <strain>ATCC 43067 / DSM 2661 / JAL-1 / JCM 10045 / NBRC 100440</strain>
    </source>
</reference>
<reference key="2">
    <citation type="journal article" date="2006" name="Acta Crystallogr. D">
        <title>Structure of Methanocaldococcus jannaschii nucleoside kinase: an archaeal member of the ribokinase family.</title>
        <authorList>
            <person name="Arnfors L."/>
            <person name="Hansen T."/>
            <person name="Schonheit P."/>
            <person name="Ladenstein R."/>
            <person name="Meining W."/>
        </authorList>
    </citation>
    <scope>PROTEIN SEQUENCE</scope>
    <scope>X-RAY CRYSTALLOGRAPHY (1.70 ANGSTROMS) OF APOENZYME AND IN COMPLEX WITH ATP ANALOG AND ADENOSINE</scope>
    <scope>COFACTOR</scope>
    <scope>MASS SPECTROMETRY</scope>
    <scope>SUBUNIT</scope>
    <scope>REACTION MECHANISM</scope>
    <scope>ACTIVE SITE</scope>
</reference>
<reference key="3">
    <citation type="journal article" date="2007" name="Extremophiles">
        <title>The phosphofructokinase-B (MJ0406) from Methanocaldococcus jannaschii represents a nucleoside kinase with a broad substrate specificity.</title>
        <authorList>
            <person name="Hansen T."/>
            <person name="Arnfors L."/>
            <person name="Ladenstein R."/>
            <person name="Schoenheit P."/>
        </authorList>
    </citation>
    <scope>FUNCTION</scope>
    <scope>CATALYTIC ACTIVITY</scope>
    <scope>BIOPHYSICOCHEMICAL PROPERTIES</scope>
    <scope>COFACTOR</scope>
    <scope>SUBUNIT</scope>
    <scope>SUBSTRATE SPECIFICITY</scope>
    <source>
        <strain>ATCC 43067 / DSM 2661 / JAL-1 / JCM 10045 / NBRC 100440</strain>
    </source>
</reference>
<keyword id="KW-0002">3D-structure</keyword>
<keyword id="KW-0067">ATP-binding</keyword>
<keyword id="KW-0903">Direct protein sequencing</keyword>
<keyword id="KW-0418">Kinase</keyword>
<keyword id="KW-0460">Magnesium</keyword>
<keyword id="KW-0464">Manganese</keyword>
<keyword id="KW-0547">Nucleotide-binding</keyword>
<keyword id="KW-1185">Reference proteome</keyword>
<keyword id="KW-0808">Transferase</keyword>
<sequence length="302" mass="33920">MGGKMEKITCVGHTALDYIFNVEKFPEPNTSIQIPSARKYYGGAAANTAVGIKKLGVNSELLSCVGYDFKNSGYERYLKNLDINISKLYYSEEEETPKAWIFTDKDNNQITFFLWGAAKHYKELNPPNFNTEIVHIATGDPEFNLKCAKKAYGNNLVSFDPGQDLPQYSKEMLLEIIEHTNFLFMNKHEFERASNLLNFEIDDYLERVDALIVTKGSKGSVIYTKDKKIEIPCIKAGKVIDPTGAGDSYRAGFLSAYVKGYDLEKCGLIGAATASFVVEAKGCQTNLPTWDKVVERLEKHRI</sequence>
<feature type="initiator methionine" description="Removed" evidence="1">
    <location>
        <position position="1"/>
    </location>
</feature>
<feature type="chain" id="PRO_0000080152" description="Nucleoside kinase">
    <location>
        <begin position="2"/>
        <end position="302"/>
    </location>
</feature>
<feature type="active site" description="Proton acceptor" evidence="5">
    <location>
        <position position="247"/>
    </location>
</feature>
<feature type="binding site" evidence="1 6">
    <location>
        <position position="17"/>
    </location>
    <ligand>
        <name>substrate</name>
    </ligand>
</feature>
<feature type="binding site" evidence="1 6">
    <location>
        <position position="33"/>
    </location>
    <ligand>
        <name>substrate</name>
    </ligand>
</feature>
<feature type="binding site" evidence="1 6">
    <location>
        <position position="43"/>
    </location>
    <ligand>
        <name>substrate</name>
    </ligand>
</feature>
<feature type="binding site" evidence="1 6">
    <location>
        <position position="47"/>
    </location>
    <ligand>
        <name>substrate</name>
    </ligand>
</feature>
<feature type="binding site" evidence="1 6">
    <location>
        <position position="109"/>
    </location>
    <ligand>
        <name>ATP</name>
        <dbReference type="ChEBI" id="CHEBI:30616"/>
    </ligand>
</feature>
<feature type="binding site" evidence="1 6">
    <location>
        <begin position="111"/>
        <end position="113"/>
    </location>
    <ligand>
        <name>substrate</name>
    </ligand>
</feature>
<feature type="binding site" evidence="1 6">
    <location>
        <position position="163"/>
    </location>
    <ligand>
        <name>substrate</name>
    </ligand>
</feature>
<feature type="binding site" evidence="1 6">
    <location>
        <position position="186"/>
    </location>
    <ligand>
        <name>ATP</name>
        <dbReference type="ChEBI" id="CHEBI:30616"/>
    </ligand>
</feature>
<feature type="binding site" evidence="1 6">
    <location>
        <begin position="214"/>
        <end position="219"/>
    </location>
    <ligand>
        <name>ATP</name>
        <dbReference type="ChEBI" id="CHEBI:30616"/>
    </ligand>
</feature>
<feature type="binding site" evidence="1 6">
    <location>
        <position position="247"/>
    </location>
    <ligand>
        <name>substrate</name>
    </ligand>
</feature>
<feature type="site" description="Transition state stabilizer" evidence="5">
    <location>
        <position position="250"/>
    </location>
</feature>
<feature type="strand" evidence="8">
    <location>
        <begin position="5"/>
        <end position="12"/>
    </location>
</feature>
<feature type="strand" evidence="8">
    <location>
        <begin position="15"/>
        <end position="21"/>
    </location>
</feature>
<feature type="strand" evidence="7">
    <location>
        <begin position="28"/>
        <end position="35"/>
    </location>
</feature>
<feature type="strand" evidence="8">
    <location>
        <begin position="37"/>
        <end position="42"/>
    </location>
</feature>
<feature type="helix" evidence="8">
    <location>
        <begin position="44"/>
        <end position="54"/>
    </location>
</feature>
<feature type="strand" evidence="8">
    <location>
        <begin position="58"/>
        <end position="62"/>
    </location>
</feature>
<feature type="turn" evidence="8">
    <location>
        <begin position="67"/>
        <end position="71"/>
    </location>
</feature>
<feature type="helix" evidence="8">
    <location>
        <begin position="73"/>
        <end position="80"/>
    </location>
</feature>
<feature type="strand" evidence="8">
    <location>
        <begin position="92"/>
        <end position="94"/>
    </location>
</feature>
<feature type="strand" evidence="8">
    <location>
        <begin position="98"/>
        <end position="103"/>
    </location>
</feature>
<feature type="strand" evidence="7">
    <location>
        <begin position="109"/>
        <end position="114"/>
    </location>
</feature>
<feature type="helix" evidence="8">
    <location>
        <begin position="116"/>
        <end position="123"/>
    </location>
</feature>
<feature type="strand" evidence="8">
    <location>
        <begin position="131"/>
        <end position="136"/>
    </location>
</feature>
<feature type="helix" evidence="8">
    <location>
        <begin position="141"/>
        <end position="151"/>
    </location>
</feature>
<feature type="strand" evidence="8">
    <location>
        <begin position="155"/>
        <end position="159"/>
    </location>
</feature>
<feature type="helix" evidence="8">
    <location>
        <begin position="162"/>
        <end position="167"/>
    </location>
</feature>
<feature type="helix" evidence="8">
    <location>
        <begin position="170"/>
        <end position="178"/>
    </location>
</feature>
<feature type="strand" evidence="8">
    <location>
        <begin position="181"/>
        <end position="186"/>
    </location>
</feature>
<feature type="helix" evidence="8">
    <location>
        <begin position="187"/>
        <end position="197"/>
    </location>
</feature>
<feature type="helix" evidence="8">
    <location>
        <begin position="201"/>
        <end position="205"/>
    </location>
</feature>
<feature type="strand" evidence="8">
    <location>
        <begin position="209"/>
        <end position="214"/>
    </location>
</feature>
<feature type="helix" evidence="8">
    <location>
        <begin position="216"/>
        <end position="218"/>
    </location>
</feature>
<feature type="strand" evidence="8">
    <location>
        <begin position="220"/>
        <end position="223"/>
    </location>
</feature>
<feature type="strand" evidence="8">
    <location>
        <begin position="228"/>
        <end position="231"/>
    </location>
</feature>
<feature type="helix" evidence="8">
    <location>
        <begin position="245"/>
        <end position="258"/>
    </location>
</feature>
<feature type="helix" evidence="8">
    <location>
        <begin position="263"/>
        <end position="277"/>
    </location>
</feature>
<feature type="strand" evidence="8">
    <location>
        <begin position="280"/>
        <end position="284"/>
    </location>
</feature>
<feature type="helix" evidence="8">
    <location>
        <begin position="290"/>
        <end position="299"/>
    </location>
</feature>